<keyword id="KW-0002">3D-structure</keyword>
<keyword id="KW-1217">Cell adhesion impairing toxin</keyword>
<keyword id="KW-0903">Direct protein sequencing</keyword>
<keyword id="KW-1015">Disulfide bond</keyword>
<keyword id="KW-0325">Glycoprotein</keyword>
<keyword id="KW-1199">Hemostasis impairing toxin</keyword>
<keyword id="KW-0378">Hydrolase</keyword>
<keyword id="KW-0479">Metal-binding</keyword>
<keyword id="KW-0482">Metalloprotease</keyword>
<keyword id="KW-1201">Platelet aggregation inhibiting toxin</keyword>
<keyword id="KW-0645">Protease</keyword>
<keyword id="KW-0964">Secreted</keyword>
<keyword id="KW-0732">Signal</keyword>
<keyword id="KW-0800">Toxin</keyword>
<keyword id="KW-0862">Zinc</keyword>
<keyword id="KW-0865">Zymogen</keyword>
<accession>P30403</accession>
<accession>P17494</accession>
<dbReference type="EC" id="3.4.24.-"/>
<dbReference type="EMBL" id="L08780">
    <property type="protein sequence ID" value="AAA49196.1"/>
    <property type="molecule type" value="mRNA"/>
</dbReference>
<dbReference type="PIR" id="S33792">
    <property type="entry name" value="JQ1301"/>
</dbReference>
<dbReference type="PDB" id="1N4Y">
    <property type="method" value="NMR"/>
    <property type="chains" value="A=408-475"/>
</dbReference>
<dbReference type="PDB" id="1Q7I">
    <property type="method" value="NMR"/>
    <property type="chains" value="A=408-475"/>
</dbReference>
<dbReference type="PDB" id="1Q7J">
    <property type="method" value="NMR"/>
    <property type="chains" value="A=408-475"/>
</dbReference>
<dbReference type="PDB" id="2LJV">
    <property type="method" value="NMR"/>
    <property type="chains" value="A=408-475"/>
</dbReference>
<dbReference type="PDB" id="2M75">
    <property type="method" value="NMR"/>
    <property type="chains" value="A=408-475"/>
</dbReference>
<dbReference type="PDB" id="2M7F">
    <property type="method" value="NMR"/>
    <property type="chains" value="A=408-478"/>
</dbReference>
<dbReference type="PDB" id="2M7H">
    <property type="method" value="NMR"/>
    <property type="chains" value="A=408-478"/>
</dbReference>
<dbReference type="PDB" id="2PJF">
    <property type="method" value="NMR"/>
    <property type="chains" value="A=408-475"/>
</dbReference>
<dbReference type="PDB" id="2PJG">
    <property type="method" value="NMR"/>
    <property type="chains" value="A=408-475"/>
</dbReference>
<dbReference type="PDB" id="2PJI">
    <property type="method" value="NMR"/>
    <property type="chains" value="A=408-475"/>
</dbReference>
<dbReference type="PDB" id="3UCI">
    <property type="method" value="X-ray"/>
    <property type="resolution" value="1.35 A"/>
    <property type="chains" value="A=408-475"/>
</dbReference>
<dbReference type="PDB" id="4M4C">
    <property type="method" value="X-ray"/>
    <property type="resolution" value="1.80 A"/>
    <property type="chains" value="A/B/C/D=408-475"/>
</dbReference>
<dbReference type="PDB" id="4R5R">
    <property type="method" value="X-ray"/>
    <property type="resolution" value="0.96 A"/>
    <property type="chains" value="A/B=408-475"/>
</dbReference>
<dbReference type="PDB" id="4R5U">
    <property type="method" value="X-ray"/>
    <property type="resolution" value="1.81 A"/>
    <property type="chains" value="A/B=408-475"/>
</dbReference>
<dbReference type="PDB" id="4RQG">
    <property type="method" value="X-ray"/>
    <property type="resolution" value="1.66 A"/>
    <property type="chains" value="A/B=408-475"/>
</dbReference>
<dbReference type="PDB" id="7X4S">
    <property type="method" value="X-ray"/>
    <property type="resolution" value="1.80 A"/>
    <property type="chains" value="A/B=408-475"/>
</dbReference>
<dbReference type="PDB" id="7X4V">
    <property type="method" value="X-ray"/>
    <property type="resolution" value="1.38 A"/>
    <property type="chains" value="A/B=408-475"/>
</dbReference>
<dbReference type="PDB" id="7X4Z">
    <property type="method" value="X-ray"/>
    <property type="resolution" value="1.48 A"/>
    <property type="chains" value="A/B=408-475"/>
</dbReference>
<dbReference type="PDBsum" id="1N4Y"/>
<dbReference type="PDBsum" id="1Q7I"/>
<dbReference type="PDBsum" id="1Q7J"/>
<dbReference type="PDBsum" id="2LJV"/>
<dbReference type="PDBsum" id="2M75"/>
<dbReference type="PDBsum" id="2M7F"/>
<dbReference type="PDBsum" id="2M7H"/>
<dbReference type="PDBsum" id="2PJF"/>
<dbReference type="PDBsum" id="2PJG"/>
<dbReference type="PDBsum" id="2PJI"/>
<dbReference type="PDBsum" id="3UCI"/>
<dbReference type="PDBsum" id="4M4C"/>
<dbReference type="PDBsum" id="4R5R"/>
<dbReference type="PDBsum" id="4R5U"/>
<dbReference type="PDBsum" id="4RQG"/>
<dbReference type="PDBsum" id="7X4S"/>
<dbReference type="PDBsum" id="7X4V"/>
<dbReference type="PDBsum" id="7X4Z"/>
<dbReference type="BMRB" id="P30403"/>
<dbReference type="SMR" id="P30403"/>
<dbReference type="MEROPS" id="M12.161"/>
<dbReference type="iPTMnet" id="P30403"/>
<dbReference type="EvolutionaryTrace" id="P30403"/>
<dbReference type="GO" id="GO:0005576">
    <property type="term" value="C:extracellular region"/>
    <property type="evidence" value="ECO:0007669"/>
    <property type="project" value="UniProtKB-SubCell"/>
</dbReference>
<dbReference type="GO" id="GO:0005886">
    <property type="term" value="C:plasma membrane"/>
    <property type="evidence" value="ECO:0007669"/>
    <property type="project" value="TreeGrafter"/>
</dbReference>
<dbReference type="GO" id="GO:0046872">
    <property type="term" value="F:metal ion binding"/>
    <property type="evidence" value="ECO:0007669"/>
    <property type="project" value="UniProtKB-KW"/>
</dbReference>
<dbReference type="GO" id="GO:0004222">
    <property type="term" value="F:metalloendopeptidase activity"/>
    <property type="evidence" value="ECO:0007669"/>
    <property type="project" value="InterPro"/>
</dbReference>
<dbReference type="GO" id="GO:0090729">
    <property type="term" value="F:toxin activity"/>
    <property type="evidence" value="ECO:0007669"/>
    <property type="project" value="UniProtKB-KW"/>
</dbReference>
<dbReference type="GO" id="GO:0006508">
    <property type="term" value="P:proteolysis"/>
    <property type="evidence" value="ECO:0007669"/>
    <property type="project" value="UniProtKB-KW"/>
</dbReference>
<dbReference type="CDD" id="cd04269">
    <property type="entry name" value="ZnMc_adamalysin_II_like"/>
    <property type="match status" value="1"/>
</dbReference>
<dbReference type="FunFam" id="3.40.390.10:FF:000002">
    <property type="entry name" value="Disintegrin and metalloproteinase domain-containing protein 22"/>
    <property type="match status" value="1"/>
</dbReference>
<dbReference type="FunFam" id="4.10.70.10:FF:000005">
    <property type="entry name" value="Zinc metalloproteinase/disintegrin"/>
    <property type="match status" value="1"/>
</dbReference>
<dbReference type="Gene3D" id="3.40.390.10">
    <property type="entry name" value="Collagenase (Catalytic Domain)"/>
    <property type="match status" value="1"/>
</dbReference>
<dbReference type="Gene3D" id="4.10.70.10">
    <property type="entry name" value="Disintegrin domain"/>
    <property type="match status" value="1"/>
</dbReference>
<dbReference type="InterPro" id="IPR018358">
    <property type="entry name" value="Disintegrin_CS"/>
</dbReference>
<dbReference type="InterPro" id="IPR001762">
    <property type="entry name" value="Disintegrin_dom"/>
</dbReference>
<dbReference type="InterPro" id="IPR036436">
    <property type="entry name" value="Disintegrin_dom_sf"/>
</dbReference>
<dbReference type="InterPro" id="IPR024079">
    <property type="entry name" value="MetalloPept_cat_dom_sf"/>
</dbReference>
<dbReference type="InterPro" id="IPR001590">
    <property type="entry name" value="Peptidase_M12B"/>
</dbReference>
<dbReference type="InterPro" id="IPR002870">
    <property type="entry name" value="Peptidase_M12B_N"/>
</dbReference>
<dbReference type="InterPro" id="IPR034027">
    <property type="entry name" value="Reprolysin_adamalysin"/>
</dbReference>
<dbReference type="PANTHER" id="PTHR11905">
    <property type="entry name" value="ADAM A DISINTEGRIN AND METALLOPROTEASE DOMAIN"/>
    <property type="match status" value="1"/>
</dbReference>
<dbReference type="PANTHER" id="PTHR11905:SF32">
    <property type="entry name" value="DISINTEGRIN AND METALLOPROTEINASE DOMAIN-CONTAINING PROTEIN 28"/>
    <property type="match status" value="1"/>
</dbReference>
<dbReference type="Pfam" id="PF00200">
    <property type="entry name" value="Disintegrin"/>
    <property type="match status" value="1"/>
</dbReference>
<dbReference type="Pfam" id="PF01562">
    <property type="entry name" value="Pep_M12B_propep"/>
    <property type="match status" value="1"/>
</dbReference>
<dbReference type="Pfam" id="PF01421">
    <property type="entry name" value="Reprolysin"/>
    <property type="match status" value="1"/>
</dbReference>
<dbReference type="PRINTS" id="PR00289">
    <property type="entry name" value="DISINTEGRIN"/>
</dbReference>
<dbReference type="SMART" id="SM00050">
    <property type="entry name" value="DISIN"/>
    <property type="match status" value="1"/>
</dbReference>
<dbReference type="SUPFAM" id="SSF57552">
    <property type="entry name" value="Blood coagulation inhibitor (disintegrin)"/>
    <property type="match status" value="1"/>
</dbReference>
<dbReference type="SUPFAM" id="SSF55486">
    <property type="entry name" value="Metalloproteases ('zincins'), catalytic domain"/>
    <property type="match status" value="1"/>
</dbReference>
<dbReference type="PROSITE" id="PS50215">
    <property type="entry name" value="ADAM_MEPRO"/>
    <property type="match status" value="1"/>
</dbReference>
<dbReference type="PROSITE" id="PS00427">
    <property type="entry name" value="DISINTEGRIN_1"/>
    <property type="match status" value="1"/>
</dbReference>
<dbReference type="PROSITE" id="PS50214">
    <property type="entry name" value="DISINTEGRIN_2"/>
    <property type="match status" value="1"/>
</dbReference>
<dbReference type="PROSITE" id="PS00142">
    <property type="entry name" value="ZINC_PROTEASE"/>
    <property type="match status" value="1"/>
</dbReference>
<feature type="signal peptide" evidence="2">
    <location>
        <begin position="1"/>
        <end position="20"/>
    </location>
</feature>
<feature type="propeptide" id="PRO_0000028956" evidence="16">
    <location>
        <begin position="21"/>
        <end position="188"/>
    </location>
</feature>
<feature type="chain" id="PRO_0000028957" description="Snake venom metalloproteinase rhodostoxin" evidence="8">
    <location>
        <begin position="189"/>
        <end position="391"/>
    </location>
</feature>
<feature type="propeptide" id="PRO_0000028958">
    <location>
        <begin position="392"/>
        <end position="407"/>
    </location>
</feature>
<feature type="chain" id="PRO_0000028959" description="Disintegrin rhodostomin" evidence="6 7">
    <location>
        <begin position="408"/>
        <end position="475"/>
    </location>
</feature>
<feature type="propeptide" id="PRO_0000028960">
    <location>
        <begin position="476"/>
        <end position="478"/>
    </location>
</feature>
<feature type="domain" description="Peptidase M12B" evidence="4">
    <location>
        <begin position="194"/>
        <end position="391"/>
    </location>
</feature>
<feature type="domain" description="Disintegrin" evidence="3">
    <location>
        <begin position="397"/>
        <end position="478"/>
    </location>
</feature>
<feature type="short sequence motif" description="Cell attachment site">
    <location>
        <begin position="456"/>
        <end position="458"/>
    </location>
</feature>
<feature type="active site" evidence="4">
    <location>
        <position position="331"/>
    </location>
</feature>
<feature type="binding site" evidence="4">
    <location>
        <position position="330"/>
    </location>
    <ligand>
        <name>Zn(2+)</name>
        <dbReference type="ChEBI" id="CHEBI:29105"/>
        <note>catalytic</note>
    </ligand>
</feature>
<feature type="binding site" evidence="4">
    <location>
        <position position="334"/>
    </location>
    <ligand>
        <name>Zn(2+)</name>
        <dbReference type="ChEBI" id="CHEBI:29105"/>
        <note>catalytic</note>
    </ligand>
</feature>
<feature type="binding site" evidence="4">
    <location>
        <position position="340"/>
    </location>
    <ligand>
        <name>Zn(2+)</name>
        <dbReference type="ChEBI" id="CHEBI:29105"/>
        <note>catalytic</note>
    </ligand>
</feature>
<feature type="glycosylation site" description="N-linked (GlcNAc...) (complex) asparagine" evidence="8">
    <location>
        <position position="279"/>
    </location>
</feature>
<feature type="glycosylation site" description="N-linked (GlcNAc...) (complex) asparagine" evidence="8">
    <location>
        <position position="369"/>
    </location>
</feature>
<feature type="disulfide bond" evidence="13">
    <location>
        <begin position="207"/>
        <end position="248"/>
    </location>
</feature>
<feature type="disulfide bond" evidence="4">
    <location>
        <begin position="305"/>
        <end position="386"/>
    </location>
</feature>
<feature type="disulfide bond" evidence="4">
    <location>
        <begin position="345"/>
        <end position="370"/>
    </location>
</feature>
<feature type="disulfide bond" evidence="4">
    <location>
        <begin position="347"/>
        <end position="353"/>
    </location>
</feature>
<feature type="disulfide bond" evidence="5 18">
    <location>
        <begin position="411"/>
        <end position="426"/>
    </location>
</feature>
<feature type="disulfide bond" evidence="5 18">
    <location>
        <begin position="413"/>
        <end position="421"/>
    </location>
</feature>
<feature type="disulfide bond" evidence="5 18">
    <location>
        <begin position="420"/>
        <end position="443"/>
    </location>
</feature>
<feature type="disulfide bond" evidence="5 18">
    <location>
        <begin position="434"/>
        <end position="440"/>
    </location>
</feature>
<feature type="disulfide bond" evidence="5 18">
    <location>
        <begin position="439"/>
        <end position="464"/>
    </location>
</feature>
<feature type="disulfide bond" evidence="3 5 18">
    <location>
        <begin position="452"/>
        <end position="471"/>
    </location>
</feature>
<feature type="sequence conflict" description="In Ref. 4; AA sequence." evidence="13" ref="4">
    <original>M</original>
    <variation>T</variation>
    <location>
        <position position="287"/>
    </location>
</feature>
<feature type="helix" evidence="22">
    <location>
        <begin position="408"/>
        <end position="410"/>
    </location>
</feature>
<feature type="strand" evidence="25">
    <location>
        <begin position="412"/>
        <end position="415"/>
    </location>
</feature>
<feature type="strand" evidence="19">
    <location>
        <begin position="419"/>
        <end position="421"/>
    </location>
</feature>
<feature type="turn" evidence="24">
    <location>
        <begin position="423"/>
        <end position="425"/>
    </location>
</feature>
<feature type="strand" evidence="24">
    <location>
        <begin position="426"/>
        <end position="428"/>
    </location>
</feature>
<feature type="strand" evidence="21">
    <location>
        <begin position="429"/>
        <end position="431"/>
    </location>
</feature>
<feature type="strand" evidence="24">
    <location>
        <begin position="435"/>
        <end position="437"/>
    </location>
</feature>
<feature type="strand" evidence="20">
    <location>
        <begin position="438"/>
        <end position="441"/>
    </location>
</feature>
<feature type="strand" evidence="24">
    <location>
        <begin position="451"/>
        <end position="453"/>
    </location>
</feature>
<feature type="strand" evidence="24">
    <location>
        <begin position="456"/>
        <end position="458"/>
    </location>
</feature>
<feature type="strand" evidence="23">
    <location>
        <begin position="461"/>
        <end position="463"/>
    </location>
</feature>
<sequence length="478" mass="54006">MIQVLLVTICLAAFPYQGSSIILESGNVNDYEVVYPRKVIALSEGAAQQKYEDTMQYEFKVNGEPVVLHLEKNKGLFAKDYSETHYSPDGTRITTYPSVEDHCYYQGRIHNDADSTASISACNGLKGHFKLQGETYFIEPMKLPDSEAHAVFKYENIEKEDESPKMCGVTETNWESDEPIKKVSQLNLNHEIKRHVDIVVVVDSRFCTKHSNDLEVIRKFVHEVVNAIIESYKYMHFGISLVNLETWCNGDLINVQEDSYETLKAFGKWRESDLIKHVNHSNAQFLMDMKFIKNIIGKAYLDSICDPERSVGIVQNYHGITLNVAAIMAHEMGHNLGVRHDGEYCTCYGSSECIMSSHISDPPSKYFSNCSYYQFWKYIENQNPQCILNKPLRTVSIPVSGNEHLEAGKECDCSSPENPCCDAATCKLRPGAQCGEGLCCEQCKFSRAGKICRIPRGDMPDDRCTGQSADCPRYHSHA</sequence>
<name>VM2RH_CALRH</name>
<organism>
    <name type="scientific">Calloselasma rhodostoma</name>
    <name type="common">Malayan pit viper</name>
    <name type="synonym">Agkistrodon rhodostoma</name>
    <dbReference type="NCBI Taxonomy" id="8717"/>
    <lineage>
        <taxon>Eukaryota</taxon>
        <taxon>Metazoa</taxon>
        <taxon>Chordata</taxon>
        <taxon>Craniata</taxon>
        <taxon>Vertebrata</taxon>
        <taxon>Euteleostomi</taxon>
        <taxon>Lepidosauria</taxon>
        <taxon>Squamata</taxon>
        <taxon>Bifurcata</taxon>
        <taxon>Unidentata</taxon>
        <taxon>Episquamata</taxon>
        <taxon>Toxicofera</taxon>
        <taxon>Serpentes</taxon>
        <taxon>Colubroidea</taxon>
        <taxon>Viperidae</taxon>
        <taxon>Crotalinae</taxon>
        <taxon>Calloselasma</taxon>
    </lineage>
</organism>
<protein>
    <recommendedName>
        <fullName>Zinc metalloproteinase/disintegrin</fullName>
    </recommendedName>
    <component>
        <recommendedName>
            <fullName evidence="12">Snake venom metalloproteinase rhodostoxin</fullName>
            <shortName>SVMP</shortName>
            <ecNumber>3.4.24.-</ecNumber>
        </recommendedName>
        <alternativeName>
            <fullName evidence="12">Hemorrhagic protein</fullName>
        </alternativeName>
    </component>
    <component>
        <recommendedName>
            <fullName evidence="10 11">Disintegrin rhodostomin</fullName>
            <shortName>RHO</shortName>
            <shortName>RHOD</shortName>
        </recommendedName>
        <alternativeName>
            <fullName evidence="9">Disintegrin kistrin</fullName>
        </alternativeName>
        <alternativeName>
            <fullName>Platelet aggregation activation inhibitor</fullName>
        </alternativeName>
    </component>
</protein>
<comment type="function">
    <molecule>Snake venom metalloproteinase rhodostoxin</molecule>
    <text evidence="1">Impairs hemostasis in the envenomed animal.</text>
</comment>
<comment type="function">
    <molecule>Disintegrin rhodostomin</molecule>
    <text>Inhibits platelet aggregation induced by ADP, thrombin, platelet-activating factor and collagen. Acts by inhibiting fibrinogen interaction with platelet receptors alpha-IIb/beta-3 (ITGA2B/ITGB3).</text>
</comment>
<comment type="cofactor">
    <cofactor evidence="1">
        <name>Zn(2+)</name>
        <dbReference type="ChEBI" id="CHEBI:29105"/>
    </cofactor>
    <text evidence="1">Binds 1 zinc ion per subunit.</text>
</comment>
<comment type="subunit">
    <text evidence="1">Monomeric (disintegrin).</text>
</comment>
<comment type="subcellular location">
    <molecule>Snake venom metalloproteinase rhodostoxin</molecule>
    <subcellularLocation>
        <location evidence="6 7 8">Secreted</location>
    </subcellularLocation>
</comment>
<comment type="tissue specificity">
    <text evidence="14 15 16">Expressed by the venom gland.</text>
</comment>
<comment type="PTM">
    <text evidence="8">Glycans are composed of 4 GlcNAc, 3 Man, 2 Gal, 2 NeuAC and 1 Fuc residue.</text>
</comment>
<comment type="similarity">
    <text evidence="13">Belongs to the venom metalloproteinase (M12B) family. P-II subfamily. P-IIa sub-subfamily.</text>
</comment>
<evidence type="ECO:0000250" key="1"/>
<evidence type="ECO:0000255" key="2"/>
<evidence type="ECO:0000255" key="3">
    <source>
        <dbReference type="PROSITE-ProRule" id="PRU00068"/>
    </source>
</evidence>
<evidence type="ECO:0000255" key="4">
    <source>
        <dbReference type="PROSITE-ProRule" id="PRU00276"/>
    </source>
</evidence>
<evidence type="ECO:0000269" key="5">
    <source>
    </source>
</evidence>
<evidence type="ECO:0000269" key="6">
    <source>
    </source>
</evidence>
<evidence type="ECO:0000269" key="7">
    <source>
    </source>
</evidence>
<evidence type="ECO:0000269" key="8">
    <source>
    </source>
</evidence>
<evidence type="ECO:0000303" key="9">
    <source>
    </source>
</evidence>
<evidence type="ECO:0000303" key="10">
    <source>
    </source>
</evidence>
<evidence type="ECO:0000303" key="11">
    <source>
    </source>
</evidence>
<evidence type="ECO:0000303" key="12">
    <source>
    </source>
</evidence>
<evidence type="ECO:0000305" key="13"/>
<evidence type="ECO:0000305" key="14">
    <source>
    </source>
</evidence>
<evidence type="ECO:0000305" key="15">
    <source>
    </source>
</evidence>
<evidence type="ECO:0000305" key="16">
    <source>
    </source>
</evidence>
<evidence type="ECO:0000312" key="17">
    <source>
        <dbReference type="PDB" id="1N4Y"/>
    </source>
</evidence>
<evidence type="ECO:0007744" key="18">
    <source>
        <dbReference type="PDB" id="1N4Y"/>
    </source>
</evidence>
<evidence type="ECO:0007829" key="19">
    <source>
        <dbReference type="PDB" id="1N4Y"/>
    </source>
</evidence>
<evidence type="ECO:0007829" key="20">
    <source>
        <dbReference type="PDB" id="1Q7I"/>
    </source>
</evidence>
<evidence type="ECO:0007829" key="21">
    <source>
        <dbReference type="PDB" id="2PJI"/>
    </source>
</evidence>
<evidence type="ECO:0007829" key="22">
    <source>
        <dbReference type="PDB" id="3UCI"/>
    </source>
</evidence>
<evidence type="ECO:0007829" key="23">
    <source>
        <dbReference type="PDB" id="4M4C"/>
    </source>
</evidence>
<evidence type="ECO:0007829" key="24">
    <source>
        <dbReference type="PDB" id="4R5R"/>
    </source>
</evidence>
<evidence type="ECO:0007829" key="25">
    <source>
        <dbReference type="PDB" id="7X4V"/>
    </source>
</evidence>
<reference key="1">
    <citation type="journal article" date="1993" name="Biochim. Biophys. Acta">
        <title>Nucleotide sequence of a full-length cDNA encoding a common precursor of platelet aggregation inhibitor and hemorrhagic protein from Calloselasma rhodostoma venom.</title>
        <authorList>
            <person name="Au L.-C."/>
        </authorList>
    </citation>
    <scope>NUCLEOTIDE SEQUENCE [MRNA]</scope>
    <source>
        <tissue>Venom gland</tissue>
    </source>
</reference>
<reference key="2">
    <citation type="journal article" date="1991" name="Biochem. Biophys. Res. Commun.">
        <title>A common precursor for a putative hemorrhagic protein and rhodostomin, a platelet aggregation inhibitor of the venom of Calloselasma rhodostoma: molecular cloning and sequence analysis.</title>
        <authorList>
            <person name="Au L.-C."/>
            <person name="Huang Y.-B."/>
            <person name="Huang T.-F."/>
            <person name="Teh G.-W."/>
            <person name="Lin H.-H."/>
            <person name="Choo K.-B."/>
        </authorList>
    </citation>
    <scope>NUCLEOTIDE SEQUENCE [MRNA] OF 77-478</scope>
    <source>
        <tissue>Venom gland</tissue>
    </source>
</reference>
<reference key="3">
    <citation type="journal article" date="1993" name="Biochem. Biophys. Res. Commun.">
        <title>Rhodostomin, an RGD-containing peptide expressed from a synthetic gene in Escherichia coli, facilitates the attachment of human hepatoma cells.</title>
        <authorList>
            <person name="Chang H.H."/>
            <person name="Hu S.T."/>
            <person name="Huang T.-F."/>
            <person name="Chen S.H."/>
            <person name="Lee Y.H."/>
            <person name="Lo S.J."/>
        </authorList>
    </citation>
    <scope>NUCLEOTIDE SEQUENCE [MRNA] OF 408-475</scope>
    <source>
        <tissue>Venom gland</tissue>
    </source>
</reference>
<reference key="4">
    <citation type="journal article" date="1996" name="Arch. Biochem. Biophys.">
        <title>Structural studies of a major hemorrhagin (rhodostoxin) from the venom of Calloselasma rhodostoma (Malayan pit viper).</title>
        <authorList>
            <person name="Chung M.C."/>
            <person name="Ponnudurai G."/>
            <person name="Kataoka M."/>
            <person name="Shimizu S."/>
            <person name="Tan N.H."/>
        </authorList>
    </citation>
    <scope>PROTEIN SEQUENCE OF 189-391</scope>
    <scope>DISULFIDE BONDS</scope>
    <scope>GLYCOSYLATION AT ASN-279 AND ASN-369</scope>
    <scope>GLYCAN STRUCTURE</scope>
    <scope>IDENTIFICATION BY MASS SPECTROMETRY</scope>
    <scope>SUBCELLULAR LOCATION</scope>
    <source>
        <tissue>Venom</tissue>
    </source>
</reference>
<reference key="5">
    <citation type="journal article" date="1990" name="Proc. Soc. Exp. Biol. Med.">
        <title>Disintegrins: a family of integrin inhibitory proteins from viper venoms.</title>
        <authorList>
            <person name="Gould R.J."/>
            <person name="Polokoff M.A."/>
            <person name="Friedman P.A."/>
            <person name="Huang T.-F."/>
            <person name="Holt J.C."/>
            <person name="Cook J.J."/>
            <person name="Niecviarowski S."/>
        </authorList>
    </citation>
    <scope>PROTEIN SEQUENCE OF 408-475</scope>
    <scope>SUBCELLULAR LOCATION</scope>
    <source>
        <tissue>Venom</tissue>
    </source>
</reference>
<reference key="6">
    <citation type="journal article" date="1990" name="Proc. Natl. Acad. Sci. U.S.A.">
        <title>Platelet glycoprotein IIb-IIIa protein antagonists from snake venoms: evidence for a family of platelet-aggregation inhibitors.</title>
        <authorList>
            <person name="Dennis M.S."/>
            <person name="Henzel W.J."/>
            <person name="Pitti R.M."/>
            <person name="Lipari M.T."/>
            <person name="Napier M.A."/>
            <person name="Deisher T.A."/>
            <person name="Bunting S."/>
            <person name="Lazarus R.A."/>
        </authorList>
    </citation>
    <scope>PROTEIN SEQUENCE OF 408-475</scope>
    <scope>SUBCELLULAR LOCATION</scope>
    <source>
        <tissue>Venom</tissue>
    </source>
</reference>
<reference key="7">
    <citation type="journal article" date="1993" name="Biochemistry">
        <title>Cysteine pairing in the glycoprotein IIbIIIa antagonist kistrin using NMR, chemical analysis, and structure calculations.</title>
        <authorList>
            <person name="Adler M."/>
            <person name="Carter P."/>
            <person name="Lazarus R.A."/>
            <person name="Wagner G."/>
        </authorList>
    </citation>
    <scope>STRUCTURE BY NMR OF 408-475</scope>
</reference>
<reference evidence="17" key="8">
    <citation type="journal article" date="1991" name="Science">
        <title>Solution structure of kistrin, a potent platelet aggregation inhibitor and GP IIb-IIIa antagonist.</title>
        <authorList>
            <person name="Adler M."/>
            <person name="Lazarus R.A."/>
            <person name="Dennis M.S."/>
            <person name="Wagner G."/>
        </authorList>
    </citation>
    <scope>STRUCTURE BY NMR OF 408-475</scope>
    <scope>DISULFIDE BONDS</scope>
</reference>
<reference key="9">
    <citation type="journal article" date="1992" name="Biochemistry">
        <title>Sequential 1H NMR assignments of kistrin, a potent platelet aggregation inhibitor and glycoprotein IIb-IIIa antagonist.</title>
        <authorList>
            <person name="Adler M."/>
            <person name="Wagner G."/>
        </authorList>
    </citation>
    <scope>STRUCTURE BY NMR OF 408-475</scope>
</reference>
<proteinExistence type="evidence at protein level"/>